<protein>
    <recommendedName>
        <fullName evidence="1">Large ribosomal subunit protein uL4</fullName>
    </recommendedName>
    <alternativeName>
        <fullName evidence="3">50S ribosomal protein L4</fullName>
    </alternativeName>
</protein>
<evidence type="ECO:0000255" key="1">
    <source>
        <dbReference type="HAMAP-Rule" id="MF_01328"/>
    </source>
</evidence>
<evidence type="ECO:0000256" key="2">
    <source>
        <dbReference type="SAM" id="MobiDB-lite"/>
    </source>
</evidence>
<evidence type="ECO:0000305" key="3"/>
<dbReference type="EMBL" id="CP000269">
    <property type="protein sequence ID" value="ABR89135.1"/>
    <property type="molecule type" value="Genomic_DNA"/>
</dbReference>
<dbReference type="RefSeq" id="WP_012081248.1">
    <property type="nucleotide sequence ID" value="NC_009659.1"/>
</dbReference>
<dbReference type="SMR" id="A6T3K3"/>
<dbReference type="STRING" id="375286.mma_3410"/>
<dbReference type="KEGG" id="mms:mma_3410"/>
<dbReference type="eggNOG" id="COG0088">
    <property type="taxonomic scope" value="Bacteria"/>
</dbReference>
<dbReference type="HOGENOM" id="CLU_041575_5_2_4"/>
<dbReference type="OrthoDB" id="9803201at2"/>
<dbReference type="Proteomes" id="UP000006388">
    <property type="component" value="Chromosome"/>
</dbReference>
<dbReference type="GO" id="GO:1990904">
    <property type="term" value="C:ribonucleoprotein complex"/>
    <property type="evidence" value="ECO:0007669"/>
    <property type="project" value="UniProtKB-KW"/>
</dbReference>
<dbReference type="GO" id="GO:0005840">
    <property type="term" value="C:ribosome"/>
    <property type="evidence" value="ECO:0007669"/>
    <property type="project" value="UniProtKB-KW"/>
</dbReference>
<dbReference type="GO" id="GO:0019843">
    <property type="term" value="F:rRNA binding"/>
    <property type="evidence" value="ECO:0007669"/>
    <property type="project" value="UniProtKB-UniRule"/>
</dbReference>
<dbReference type="GO" id="GO:0003735">
    <property type="term" value="F:structural constituent of ribosome"/>
    <property type="evidence" value="ECO:0007669"/>
    <property type="project" value="InterPro"/>
</dbReference>
<dbReference type="GO" id="GO:0006412">
    <property type="term" value="P:translation"/>
    <property type="evidence" value="ECO:0007669"/>
    <property type="project" value="UniProtKB-UniRule"/>
</dbReference>
<dbReference type="Gene3D" id="3.40.1370.10">
    <property type="match status" value="1"/>
</dbReference>
<dbReference type="HAMAP" id="MF_01328_B">
    <property type="entry name" value="Ribosomal_uL4_B"/>
    <property type="match status" value="1"/>
</dbReference>
<dbReference type="InterPro" id="IPR002136">
    <property type="entry name" value="Ribosomal_uL4"/>
</dbReference>
<dbReference type="InterPro" id="IPR013005">
    <property type="entry name" value="Ribosomal_uL4-like"/>
</dbReference>
<dbReference type="InterPro" id="IPR023574">
    <property type="entry name" value="Ribosomal_uL4_dom_sf"/>
</dbReference>
<dbReference type="NCBIfam" id="TIGR03953">
    <property type="entry name" value="rplD_bact"/>
    <property type="match status" value="1"/>
</dbReference>
<dbReference type="PANTHER" id="PTHR10746">
    <property type="entry name" value="50S RIBOSOMAL PROTEIN L4"/>
    <property type="match status" value="1"/>
</dbReference>
<dbReference type="PANTHER" id="PTHR10746:SF6">
    <property type="entry name" value="LARGE RIBOSOMAL SUBUNIT PROTEIN UL4M"/>
    <property type="match status" value="1"/>
</dbReference>
<dbReference type="Pfam" id="PF00573">
    <property type="entry name" value="Ribosomal_L4"/>
    <property type="match status" value="1"/>
</dbReference>
<dbReference type="SUPFAM" id="SSF52166">
    <property type="entry name" value="Ribosomal protein L4"/>
    <property type="match status" value="1"/>
</dbReference>
<gene>
    <name evidence="1" type="primary">rplD</name>
    <name type="ordered locus">mma_3410</name>
</gene>
<comment type="function">
    <text evidence="1">One of the primary rRNA binding proteins, this protein initially binds near the 5'-end of the 23S rRNA. It is important during the early stages of 50S assembly. It makes multiple contacts with different domains of the 23S rRNA in the assembled 50S subunit and ribosome.</text>
</comment>
<comment type="function">
    <text evidence="1">Forms part of the polypeptide exit tunnel.</text>
</comment>
<comment type="subunit">
    <text evidence="1">Part of the 50S ribosomal subunit.</text>
</comment>
<comment type="similarity">
    <text evidence="1">Belongs to the universal ribosomal protein uL4 family.</text>
</comment>
<keyword id="KW-0687">Ribonucleoprotein</keyword>
<keyword id="KW-0689">Ribosomal protein</keyword>
<keyword id="KW-0694">RNA-binding</keyword>
<keyword id="KW-0699">rRNA-binding</keyword>
<proteinExistence type="inferred from homology"/>
<reference key="1">
    <citation type="journal article" date="2007" name="PLoS Genet.">
        <title>Genome analysis of Minibacterium massiliensis highlights the convergent evolution of water-living bacteria.</title>
        <authorList>
            <person name="Audic S."/>
            <person name="Robert C."/>
            <person name="Campagna B."/>
            <person name="Parinello H."/>
            <person name="Claverie J.-M."/>
            <person name="Raoult D."/>
            <person name="Drancourt M."/>
        </authorList>
    </citation>
    <scope>NUCLEOTIDE SEQUENCE [LARGE SCALE GENOMIC DNA]</scope>
    <source>
        <strain>Marseille</strain>
    </source>
</reference>
<feature type="chain" id="PRO_1000052418" description="Large ribosomal subunit protein uL4">
    <location>
        <begin position="1"/>
        <end position="206"/>
    </location>
</feature>
<feature type="region of interest" description="Disordered" evidence="2">
    <location>
        <begin position="43"/>
        <end position="78"/>
    </location>
</feature>
<feature type="compositionally biased region" description="Basic and acidic residues" evidence="2">
    <location>
        <begin position="49"/>
        <end position="58"/>
    </location>
</feature>
<feature type="compositionally biased region" description="Basic residues" evidence="2">
    <location>
        <begin position="59"/>
        <end position="70"/>
    </location>
</feature>
<organism>
    <name type="scientific">Janthinobacterium sp. (strain Marseille)</name>
    <name type="common">Minibacterium massiliensis</name>
    <dbReference type="NCBI Taxonomy" id="375286"/>
    <lineage>
        <taxon>Bacteria</taxon>
        <taxon>Pseudomonadati</taxon>
        <taxon>Pseudomonadota</taxon>
        <taxon>Betaproteobacteria</taxon>
        <taxon>Burkholderiales</taxon>
        <taxon>Oxalobacteraceae</taxon>
        <taxon>Janthinobacterium</taxon>
    </lineage>
</organism>
<accession>A6T3K3</accession>
<sequence>MELKLLNDQGQAASNVAAPDTIFGRDYNEALIHQVVVAYQANARSGNRKQKDREEVHHTTKKPWRQKGTGRARAGMSSSPLWRGGGRIFPNSPDENFSHKVNKKMYRAGVCSILSQLAREGRLSVIENLSVEAPKTKLLSQKLKGMGLDSVLVITDSLDENLLLASRNLPNVLICEPRHADPVSLVFYKKILITKLALAKIEEMLA</sequence>
<name>RL4_JANMA</name>